<protein>
    <recommendedName>
        <fullName evidence="1">Inositol 2-dehydrogenase 3</fullName>
        <ecNumber evidence="1">1.1.1.18</ecNumber>
    </recommendedName>
    <alternativeName>
        <fullName evidence="1">Myo-inositol 2-dehydrogenase 3</fullName>
        <shortName evidence="1">MI 2-dehydrogenase 3</shortName>
    </alternativeName>
</protein>
<gene>
    <name evidence="1" type="primary">iolG3</name>
    <name type="ordered locus">SACE_4657</name>
</gene>
<feature type="chain" id="PRO_0000352592" description="Inositol 2-dehydrogenase 3">
    <location>
        <begin position="1"/>
        <end position="338"/>
    </location>
</feature>
<comment type="function">
    <text evidence="1">Involved in the oxidation of myo-inositol (MI) to 2-keto-myo-inositol (2KMI or 2-inosose).</text>
</comment>
<comment type="catalytic activity">
    <reaction evidence="1">
        <text>myo-inositol + NAD(+) = scyllo-inosose + NADH + H(+)</text>
        <dbReference type="Rhea" id="RHEA:16949"/>
        <dbReference type="ChEBI" id="CHEBI:15378"/>
        <dbReference type="ChEBI" id="CHEBI:17268"/>
        <dbReference type="ChEBI" id="CHEBI:17811"/>
        <dbReference type="ChEBI" id="CHEBI:57540"/>
        <dbReference type="ChEBI" id="CHEBI:57945"/>
        <dbReference type="EC" id="1.1.1.18"/>
    </reaction>
</comment>
<comment type="subunit">
    <text evidence="1">Homotetramer.</text>
</comment>
<comment type="similarity">
    <text evidence="1">Belongs to the Gfo/Idh/MocA family.</text>
</comment>
<sequence length="338" mass="36130">MTVRVGVIGTGMIGQDHIRRLTRVVTGAEIVAVTDIDADRAASVAGGVGARTMPSGADVIGSADVDAVLVTSWGPTHAEHVLAAIEAGKAVFCEKPLATEVEDCLRIVEAESARGKRLVQVGFMRRYDAGYREMKELVDAGGIGTPLMAHCVHRNPTVPETYHSAMAAQDTAVHEIDTLRWLLDDEIVSAQVIRPRRTSKRFEHLQDPQIMLFETESGARIDVEVFVNCQYGYDIQCEVVGESGTVRLPDPARTGLPSAGSVRAAITQDWKQRFADAFDAELQSWVDSVAHGAAGGPSAWDGYAATAICGATVEALHSGQVVPVALKDRPGLYGGNNQ</sequence>
<proteinExistence type="inferred from homology"/>
<evidence type="ECO:0000255" key="1">
    <source>
        <dbReference type="HAMAP-Rule" id="MF_01671"/>
    </source>
</evidence>
<dbReference type="EC" id="1.1.1.18" evidence="1"/>
<dbReference type="EMBL" id="AM420293">
    <property type="protein sequence ID" value="CAM03926.1"/>
    <property type="molecule type" value="Genomic_DNA"/>
</dbReference>
<dbReference type="RefSeq" id="WP_009943452.1">
    <property type="nucleotide sequence ID" value="NC_009142.1"/>
</dbReference>
<dbReference type="SMR" id="A4FIQ1"/>
<dbReference type="STRING" id="405948.SACE_4657"/>
<dbReference type="KEGG" id="sen:SACE_4657"/>
<dbReference type="eggNOG" id="COG0673">
    <property type="taxonomic scope" value="Bacteria"/>
</dbReference>
<dbReference type="HOGENOM" id="CLU_023194_0_1_11"/>
<dbReference type="OrthoDB" id="9815825at2"/>
<dbReference type="Proteomes" id="UP000006728">
    <property type="component" value="Chromosome"/>
</dbReference>
<dbReference type="GO" id="GO:0050112">
    <property type="term" value="F:inositol 2-dehydrogenase (NAD+) activity"/>
    <property type="evidence" value="ECO:0007669"/>
    <property type="project" value="UniProtKB-UniRule"/>
</dbReference>
<dbReference type="GO" id="GO:0000166">
    <property type="term" value="F:nucleotide binding"/>
    <property type="evidence" value="ECO:0007669"/>
    <property type="project" value="InterPro"/>
</dbReference>
<dbReference type="GO" id="GO:0019310">
    <property type="term" value="P:inositol catabolic process"/>
    <property type="evidence" value="ECO:0007669"/>
    <property type="project" value="UniProtKB-UniRule"/>
</dbReference>
<dbReference type="Gene3D" id="3.30.360.10">
    <property type="entry name" value="Dihydrodipicolinate Reductase, domain 2"/>
    <property type="match status" value="1"/>
</dbReference>
<dbReference type="Gene3D" id="3.40.50.720">
    <property type="entry name" value="NAD(P)-binding Rossmann-like Domain"/>
    <property type="match status" value="1"/>
</dbReference>
<dbReference type="HAMAP" id="MF_01671">
    <property type="entry name" value="IolG"/>
    <property type="match status" value="1"/>
</dbReference>
<dbReference type="InterPro" id="IPR050424">
    <property type="entry name" value="Gfo-Idh-MocA_inositol_DH"/>
</dbReference>
<dbReference type="InterPro" id="IPR004104">
    <property type="entry name" value="Gfo/Idh/MocA-like_OxRdtase_C"/>
</dbReference>
<dbReference type="InterPro" id="IPR000683">
    <property type="entry name" value="Gfo/Idh/MocA-like_OxRdtase_N"/>
</dbReference>
<dbReference type="InterPro" id="IPR023794">
    <property type="entry name" value="MI/DCI_dehydrogenase"/>
</dbReference>
<dbReference type="InterPro" id="IPR036291">
    <property type="entry name" value="NAD(P)-bd_dom_sf"/>
</dbReference>
<dbReference type="PANTHER" id="PTHR43593">
    <property type="match status" value="1"/>
</dbReference>
<dbReference type="PANTHER" id="PTHR43593:SF1">
    <property type="entry name" value="INOSITOL 2-DEHYDROGENASE"/>
    <property type="match status" value="1"/>
</dbReference>
<dbReference type="Pfam" id="PF01408">
    <property type="entry name" value="GFO_IDH_MocA"/>
    <property type="match status" value="1"/>
</dbReference>
<dbReference type="Pfam" id="PF02894">
    <property type="entry name" value="GFO_IDH_MocA_C"/>
    <property type="match status" value="1"/>
</dbReference>
<dbReference type="SUPFAM" id="SSF55347">
    <property type="entry name" value="Glyceraldehyde-3-phosphate dehydrogenase-like, C-terminal domain"/>
    <property type="match status" value="1"/>
</dbReference>
<dbReference type="SUPFAM" id="SSF51735">
    <property type="entry name" value="NAD(P)-binding Rossmann-fold domains"/>
    <property type="match status" value="1"/>
</dbReference>
<keyword id="KW-0520">NAD</keyword>
<keyword id="KW-0560">Oxidoreductase</keyword>
<keyword id="KW-1185">Reference proteome</keyword>
<accession>A4FIQ1</accession>
<reference key="1">
    <citation type="journal article" date="2007" name="Nat. Biotechnol.">
        <title>Complete genome sequence of the erythromycin-producing bacterium Saccharopolyspora erythraea NRRL23338.</title>
        <authorList>
            <person name="Oliynyk M."/>
            <person name="Samborskyy M."/>
            <person name="Lester J.B."/>
            <person name="Mironenko T."/>
            <person name="Scott N."/>
            <person name="Dickens S."/>
            <person name="Haydock S.F."/>
            <person name="Leadlay P.F."/>
        </authorList>
    </citation>
    <scope>NUCLEOTIDE SEQUENCE [LARGE SCALE GENOMIC DNA]</scope>
    <source>
        <strain>ATCC 11635 / DSM 40517 / JCM 4748 / NBRC 13426 / NCIMB 8594 / NRRL 2338</strain>
    </source>
</reference>
<name>IOLG3_SACEN</name>
<organism>
    <name type="scientific">Saccharopolyspora erythraea (strain ATCC 11635 / DSM 40517 / JCM 4748 / NBRC 13426 / NCIMB 8594 / NRRL 2338)</name>
    <dbReference type="NCBI Taxonomy" id="405948"/>
    <lineage>
        <taxon>Bacteria</taxon>
        <taxon>Bacillati</taxon>
        <taxon>Actinomycetota</taxon>
        <taxon>Actinomycetes</taxon>
        <taxon>Pseudonocardiales</taxon>
        <taxon>Pseudonocardiaceae</taxon>
        <taxon>Saccharopolyspora</taxon>
    </lineage>
</organism>